<name>CYSJ_THIRO</name>
<protein>
    <recommendedName>
        <fullName>Sulfite reductase [NADPH] flavoprotein alpha-component</fullName>
        <shortName>SIR-FP</shortName>
        <ecNumber>1.8.1.2</ecNumber>
    </recommendedName>
</protein>
<keyword id="KW-0028">Amino-acid biosynthesis</keyword>
<keyword id="KW-0198">Cysteine biosynthesis</keyword>
<keyword id="KW-0249">Electron transport</keyword>
<keyword id="KW-0274">FAD</keyword>
<keyword id="KW-0285">Flavoprotein</keyword>
<keyword id="KW-0288">FMN</keyword>
<keyword id="KW-0521">NADP</keyword>
<keyword id="KW-0560">Oxidoreductase</keyword>
<keyword id="KW-0813">Transport</keyword>
<comment type="function">
    <text evidence="1">Catalyzes the 6-electron reduction of sulfite to sulfide. This is one of several activities required for the biosynthesis of L-cysteine from sulfate. The flavo-protein component catalyzes the electron flow from NADPH -&gt; FAD -&gt; FMN to the hemoprotein component (By similarity).</text>
</comment>
<comment type="catalytic activity">
    <reaction>
        <text>hydrogen sulfide + 3 NADP(+) + 3 H2O = sulfite + 3 NADPH + 4 H(+)</text>
        <dbReference type="Rhea" id="RHEA:13801"/>
        <dbReference type="ChEBI" id="CHEBI:15377"/>
        <dbReference type="ChEBI" id="CHEBI:15378"/>
        <dbReference type="ChEBI" id="CHEBI:17359"/>
        <dbReference type="ChEBI" id="CHEBI:29919"/>
        <dbReference type="ChEBI" id="CHEBI:57783"/>
        <dbReference type="ChEBI" id="CHEBI:58349"/>
        <dbReference type="EC" id="1.8.1.2"/>
    </reaction>
</comment>
<comment type="cofactor">
    <cofactor evidence="1">
        <name>FAD</name>
        <dbReference type="ChEBI" id="CHEBI:57692"/>
    </cofactor>
    <text evidence="1">Binds 1 FAD per subunit.</text>
</comment>
<comment type="cofactor">
    <cofactor evidence="1">
        <name>FMN</name>
        <dbReference type="ChEBI" id="CHEBI:58210"/>
    </cofactor>
    <text evidence="1">Binds 1 FMN per subunit.</text>
</comment>
<comment type="subunit">
    <text evidence="1">Alpha(8)-beta(8). The alpha component is a flavoprotein, the beta component is a hemoprotein (By similarity).</text>
</comment>
<dbReference type="EC" id="1.8.1.2"/>
<dbReference type="EMBL" id="Z23169">
    <property type="protein sequence ID" value="CAA80687.1"/>
    <property type="molecule type" value="Genomic_DNA"/>
</dbReference>
<dbReference type="PIR" id="S34190">
    <property type="entry name" value="S34190"/>
</dbReference>
<dbReference type="SMR" id="P52674"/>
<dbReference type="GO" id="GO:0005829">
    <property type="term" value="C:cytosol"/>
    <property type="evidence" value="ECO:0007669"/>
    <property type="project" value="TreeGrafter"/>
</dbReference>
<dbReference type="GO" id="GO:0050660">
    <property type="term" value="F:flavin adenine dinucleotide binding"/>
    <property type="evidence" value="ECO:0007669"/>
    <property type="project" value="TreeGrafter"/>
</dbReference>
<dbReference type="GO" id="GO:0010181">
    <property type="term" value="F:FMN binding"/>
    <property type="evidence" value="ECO:0007669"/>
    <property type="project" value="InterPro"/>
</dbReference>
<dbReference type="GO" id="GO:0004783">
    <property type="term" value="F:sulfite reductase (NADPH) activity"/>
    <property type="evidence" value="ECO:0007669"/>
    <property type="project" value="UniProtKB-EC"/>
</dbReference>
<dbReference type="GO" id="GO:0019344">
    <property type="term" value="P:cysteine biosynthetic process"/>
    <property type="evidence" value="ECO:0007669"/>
    <property type="project" value="UniProtKB-KW"/>
</dbReference>
<dbReference type="Gene3D" id="3.40.50.360">
    <property type="match status" value="1"/>
</dbReference>
<dbReference type="Gene3D" id="1.20.990.10">
    <property type="entry name" value="NADPH-cytochrome p450 Reductase, Chain A, domain 3"/>
    <property type="match status" value="1"/>
</dbReference>
<dbReference type="Gene3D" id="3.40.50.80">
    <property type="entry name" value="Nucleotide-binding domain of ferredoxin-NADP reductase (FNR) module"/>
    <property type="match status" value="1"/>
</dbReference>
<dbReference type="Gene3D" id="2.40.30.10">
    <property type="entry name" value="Translation factors"/>
    <property type="match status" value="1"/>
</dbReference>
<dbReference type="InterPro" id="IPR003097">
    <property type="entry name" value="CysJ-like_FAD-binding"/>
</dbReference>
<dbReference type="InterPro" id="IPR017927">
    <property type="entry name" value="FAD-bd_FR_type"/>
</dbReference>
<dbReference type="InterPro" id="IPR001094">
    <property type="entry name" value="Flavdoxin-like"/>
</dbReference>
<dbReference type="InterPro" id="IPR008254">
    <property type="entry name" value="Flavodoxin/NO_synth"/>
</dbReference>
<dbReference type="InterPro" id="IPR001709">
    <property type="entry name" value="Flavoprot_Pyr_Nucl_cyt_Rdtase"/>
</dbReference>
<dbReference type="InterPro" id="IPR029039">
    <property type="entry name" value="Flavoprotein-like_sf"/>
</dbReference>
<dbReference type="InterPro" id="IPR039261">
    <property type="entry name" value="FNR_nucleotide-bd"/>
</dbReference>
<dbReference type="InterPro" id="IPR023173">
    <property type="entry name" value="NADPH_Cyt_P450_Rdtase_alpha"/>
</dbReference>
<dbReference type="InterPro" id="IPR001433">
    <property type="entry name" value="OxRdtase_FAD/NAD-bd"/>
</dbReference>
<dbReference type="InterPro" id="IPR017938">
    <property type="entry name" value="Riboflavin_synthase-like_b-brl"/>
</dbReference>
<dbReference type="PANTHER" id="PTHR19384:SF128">
    <property type="entry name" value="NADPH OXIDOREDUCTASE A"/>
    <property type="match status" value="1"/>
</dbReference>
<dbReference type="PANTHER" id="PTHR19384">
    <property type="entry name" value="NITRIC OXIDE SYNTHASE-RELATED"/>
    <property type="match status" value="1"/>
</dbReference>
<dbReference type="Pfam" id="PF00667">
    <property type="entry name" value="FAD_binding_1"/>
    <property type="match status" value="1"/>
</dbReference>
<dbReference type="Pfam" id="PF00258">
    <property type="entry name" value="Flavodoxin_1"/>
    <property type="match status" value="1"/>
</dbReference>
<dbReference type="Pfam" id="PF00175">
    <property type="entry name" value="NAD_binding_1"/>
    <property type="match status" value="1"/>
</dbReference>
<dbReference type="PRINTS" id="PR00369">
    <property type="entry name" value="FLAVODOXIN"/>
</dbReference>
<dbReference type="PRINTS" id="PR00371">
    <property type="entry name" value="FPNCR"/>
</dbReference>
<dbReference type="SUPFAM" id="SSF52343">
    <property type="entry name" value="Ferredoxin reductase-like, C-terminal NADP-linked domain"/>
    <property type="match status" value="1"/>
</dbReference>
<dbReference type="SUPFAM" id="SSF52218">
    <property type="entry name" value="Flavoproteins"/>
    <property type="match status" value="1"/>
</dbReference>
<dbReference type="SUPFAM" id="SSF63380">
    <property type="entry name" value="Riboflavin synthase domain-like"/>
    <property type="match status" value="1"/>
</dbReference>
<dbReference type="PROSITE" id="PS51384">
    <property type="entry name" value="FAD_FR"/>
    <property type="match status" value="1"/>
</dbReference>
<dbReference type="PROSITE" id="PS50902">
    <property type="entry name" value="FLAVODOXIN_LIKE"/>
    <property type="match status" value="1"/>
</dbReference>
<organism>
    <name type="scientific">Thiocapsa roseopersicina</name>
    <dbReference type="NCBI Taxonomy" id="1058"/>
    <lineage>
        <taxon>Bacteria</taxon>
        <taxon>Pseudomonadati</taxon>
        <taxon>Pseudomonadota</taxon>
        <taxon>Gammaproteobacteria</taxon>
        <taxon>Chromatiales</taxon>
        <taxon>Chromatiaceae</taxon>
        <taxon>Thiocapsa</taxon>
    </lineage>
</organism>
<sequence length="522" mass="57784">MVLSQLNGLTSPLDERHVHALQIALKGMTPTQLAWVSGYLAGIGGGPLRMPTEPKAVERITILFGSQTGNAKAVAEQLGARASEQGMDARVISMGDFNPRKLSKEQWVLIVVSTHGEGEPPENAYALHAFIQDQGAGRLEQLPFAVLGLGDSSYEHFCRTAVDFDRRLAELGAQRILPLQCCALDYRSDTERWSSDALNRLSALAPRKASNVVAMPTLRSHQDLRSHQEQSRNRARPYDKDNPYTATLLENRRITTLDAVSDVRHLALAIEPDAMHYRPGDALGVWVENDPSLADTILAGVGIDGAARIELGDEELDLRHALIERLELTQLHPTTVRGWSRASGRTGAEDAGERLEREEQTRIYLAGNDAFRLPDAGDTPLIMIGAGTGVAPYRAFLQQRAANGHPGRNWLIFGNRHFHRDFLYQLDWQAHRKAGRLDRVSLAFSRDGAEKPYVQQRLREEGKEILRWLDAGAHLYVCGATAMGQAVDHALVEIFTIEAGLDPDCASLRRYPARECYATDDL</sequence>
<accession>P52674</accession>
<proteinExistence type="inferred from homology"/>
<gene>
    <name type="primary">cysJ</name>
</gene>
<evidence type="ECO:0000250" key="1"/>
<evidence type="ECO:0000255" key="2">
    <source>
        <dbReference type="PROSITE-ProRule" id="PRU00088"/>
    </source>
</evidence>
<evidence type="ECO:0000255" key="3">
    <source>
        <dbReference type="PROSITE-ProRule" id="PRU00716"/>
    </source>
</evidence>
<evidence type="ECO:0000256" key="4">
    <source>
        <dbReference type="SAM" id="MobiDB-lite"/>
    </source>
</evidence>
<feature type="chain" id="PRO_0000199938" description="Sulfite reductase [NADPH] flavoprotein alpha-component">
    <location>
        <begin position="1"/>
        <end position="522"/>
    </location>
</feature>
<feature type="domain" description="Flavodoxin-like" evidence="2">
    <location>
        <begin position="60"/>
        <end position="198"/>
    </location>
</feature>
<feature type="domain" description="FAD-binding FR-type" evidence="3">
    <location>
        <begin position="241"/>
        <end position="399"/>
    </location>
</feature>
<feature type="region of interest" description="Disordered" evidence="4">
    <location>
        <begin position="217"/>
        <end position="242"/>
    </location>
</feature>
<feature type="compositionally biased region" description="Basic and acidic residues" evidence="4">
    <location>
        <begin position="220"/>
        <end position="242"/>
    </location>
</feature>
<reference key="1">
    <citation type="journal article" date="1996" name="Biochim. Biophys. Acta">
        <title>A cDNA clone from Arabidopsis thaliana encoding plastidic ferredoxin:sulfite reductase.</title>
        <authorList>
            <person name="Bruehl A."/>
            <person name="Haverkamp T."/>
            <person name="Gisselmann G."/>
            <person name="Schwenn J.D."/>
        </authorList>
    </citation>
    <scope>NUCLEOTIDE SEQUENCE [GENOMIC DNA]</scope>
    <source>
        <strain>DSM 219 / 6311</strain>
    </source>
</reference>